<accession>Q6PI62</accession>
<accession>A2AHI2</accession>
<accession>Q4VA66</accession>
<comment type="function">
    <text evidence="3 5">Is a receptor for the SMIM20 derived peptides Phoenixin-14 and Phoenixin-20 (PubMed:27268078). It mediates the Phoenixin-14 and Phoenixin-20 augmentation of gonadotropin-releasing hormone (GNRH) signaling in the hypothalamus and pituitary gland (PubMed:27268078). In the ovary, it mediates the effects of Phoenixin-14 and Phoenixin-20 induced granulosa cell proliferation during follicular growth (PubMed:30933929).</text>
</comment>
<comment type="subcellular location">
    <subcellularLocation>
        <location evidence="6">Cell membrane</location>
        <topology evidence="1">Multi-pass membrane protein</topology>
    </subcellularLocation>
</comment>
<comment type="tissue specificity">
    <text evidence="4 5">Expressed in the ovary, specifically in granulosa cells of follicles that have passed the primary stage and in oocytes (at protein level) (PubMed:30933929). Expressed in preadipocytes (PubMed:30251651).</text>
</comment>
<comment type="similarity">
    <text evidence="2">Belongs to the G-protein coupled receptor 1 family.</text>
</comment>
<keyword id="KW-1003">Cell membrane</keyword>
<keyword id="KW-1015">Disulfide bond</keyword>
<keyword id="KW-0297">G-protein coupled receptor</keyword>
<keyword id="KW-0325">Glycoprotein</keyword>
<keyword id="KW-0472">Membrane</keyword>
<keyword id="KW-0675">Receptor</keyword>
<keyword id="KW-1185">Reference proteome</keyword>
<keyword id="KW-0807">Transducer</keyword>
<keyword id="KW-0812">Transmembrane</keyword>
<keyword id="KW-1133">Transmembrane helix</keyword>
<feature type="chain" id="PRO_0000069651" description="Probable G-protein coupled receptor 173">
    <location>
        <begin position="1"/>
        <end position="373"/>
    </location>
</feature>
<feature type="topological domain" description="Extracellular" evidence="1">
    <location>
        <begin position="1"/>
        <end position="26"/>
    </location>
</feature>
<feature type="transmembrane region" description="Helical; Name=1" evidence="1">
    <location>
        <begin position="27"/>
        <end position="47"/>
    </location>
</feature>
<feature type="topological domain" description="Cytoplasmic" evidence="1">
    <location>
        <begin position="48"/>
        <end position="59"/>
    </location>
</feature>
<feature type="transmembrane region" description="Helical; Name=2" evidence="1">
    <location>
        <begin position="60"/>
        <end position="80"/>
    </location>
</feature>
<feature type="topological domain" description="Extracellular" evidence="1">
    <location>
        <begin position="81"/>
        <end position="97"/>
    </location>
</feature>
<feature type="transmembrane region" description="Helical; Name=3" evidence="1">
    <location>
        <begin position="98"/>
        <end position="118"/>
    </location>
</feature>
<feature type="topological domain" description="Cytoplasmic" evidence="1">
    <location>
        <begin position="119"/>
        <end position="139"/>
    </location>
</feature>
<feature type="transmembrane region" description="Helical; Name=4" evidence="1">
    <location>
        <begin position="140"/>
        <end position="160"/>
    </location>
</feature>
<feature type="topological domain" description="Extracellular" evidence="1">
    <location>
        <begin position="161"/>
        <end position="188"/>
    </location>
</feature>
<feature type="transmembrane region" description="Helical; Name=5" evidence="1">
    <location>
        <begin position="189"/>
        <end position="209"/>
    </location>
</feature>
<feature type="topological domain" description="Cytoplasmic" evidence="1">
    <location>
        <begin position="210"/>
        <end position="287"/>
    </location>
</feature>
<feature type="transmembrane region" description="Helical; Name=6" evidence="1">
    <location>
        <begin position="288"/>
        <end position="308"/>
    </location>
</feature>
<feature type="topological domain" description="Extracellular" evidence="1">
    <location>
        <begin position="309"/>
        <end position="322"/>
    </location>
</feature>
<feature type="transmembrane region" description="Helical; Name=7" evidence="1">
    <location>
        <begin position="323"/>
        <end position="343"/>
    </location>
</feature>
<feature type="topological domain" description="Cytoplasmic" evidence="1">
    <location>
        <begin position="344"/>
        <end position="373"/>
    </location>
</feature>
<feature type="glycosylation site" description="N-linked (GlcNAc...) asparagine" evidence="1">
    <location>
        <position position="3"/>
    </location>
</feature>
<feature type="glycosylation site" description="N-linked (GlcNAc...) asparagine" evidence="1">
    <location>
        <position position="184"/>
    </location>
</feature>
<feature type="disulfide bond" evidence="2">
    <location>
        <begin position="96"/>
        <end position="174"/>
    </location>
</feature>
<proteinExistence type="evidence at protein level"/>
<reference key="1">
    <citation type="journal article" date="2009" name="PLoS Biol.">
        <title>Lineage-specific biology revealed by a finished genome assembly of the mouse.</title>
        <authorList>
            <person name="Church D.M."/>
            <person name="Goodstadt L."/>
            <person name="Hillier L.W."/>
            <person name="Zody M.C."/>
            <person name="Goldstein S."/>
            <person name="She X."/>
            <person name="Bult C.J."/>
            <person name="Agarwala R."/>
            <person name="Cherry J.L."/>
            <person name="DiCuccio M."/>
            <person name="Hlavina W."/>
            <person name="Kapustin Y."/>
            <person name="Meric P."/>
            <person name="Maglott D."/>
            <person name="Birtle Z."/>
            <person name="Marques A.C."/>
            <person name="Graves T."/>
            <person name="Zhou S."/>
            <person name="Teague B."/>
            <person name="Potamousis K."/>
            <person name="Churas C."/>
            <person name="Place M."/>
            <person name="Herschleb J."/>
            <person name="Runnheim R."/>
            <person name="Forrest D."/>
            <person name="Amos-Landgraf J."/>
            <person name="Schwartz D.C."/>
            <person name="Cheng Z."/>
            <person name="Lindblad-Toh K."/>
            <person name="Eichler E.E."/>
            <person name="Ponting C.P."/>
        </authorList>
    </citation>
    <scope>NUCLEOTIDE SEQUENCE [LARGE SCALE GENOMIC DNA]</scope>
    <source>
        <strain>C57BL/6J</strain>
    </source>
</reference>
<reference key="2">
    <citation type="journal article" date="2004" name="Genome Res.">
        <title>The status, quality, and expansion of the NIH full-length cDNA project: the Mammalian Gene Collection (MGC).</title>
        <authorList>
            <consortium name="The MGC Project Team"/>
        </authorList>
    </citation>
    <scope>NUCLEOTIDE SEQUENCE [LARGE SCALE MRNA]</scope>
    <source>
        <strain>C57BL/6J</strain>
        <tissue>Brain</tissue>
    </source>
</reference>
<reference key="3">
    <citation type="journal article" date="2016" name="Mol. Endocrinol.">
        <title>Phoenixin Activates Immortalized GnRH and Kisspeptin Neurons Through the Novel Receptor GPR173.</title>
        <authorList>
            <person name="Treen A.K."/>
            <person name="Luo V."/>
            <person name="Belsham D.D."/>
        </authorList>
    </citation>
    <scope>FUNCTION</scope>
</reference>
<reference key="4">
    <citation type="journal article" date="2018" name="Biochim. Biophys. Acta">
        <title>Phoenixin-14 stimulates differentiation of 3T3-L1 preadipocytes via cAMP/Epac-dependent mechanism.</title>
        <authorList>
            <person name="Billert M."/>
            <person name="Wojciechowicz T."/>
            <person name="Jasaszwili M."/>
            <person name="Szczepankiewicz D."/>
            <person name="Wasko J."/>
            <person name="Kazmierczak S."/>
            <person name="Strowski M.Z."/>
            <person name="Nowak K.W."/>
            <person name="Skrzypski M."/>
        </authorList>
    </citation>
    <scope>TISSUE SPECIFICITY</scope>
</reference>
<reference key="5">
    <citation type="journal article" date="2019" name="Reproduction">
        <title>Effect of the Neuropeptide Phoenixin and Its Receptor GPR173 During Folliculogenesis.</title>
        <authorList>
            <person name="Nguyen X.P."/>
            <person name="Nakamura T."/>
            <person name="Osuka S."/>
            <person name="Bayasula B."/>
            <person name="Nakanishi N."/>
            <person name="Kasahara Y."/>
            <person name="Muraoka A."/>
            <person name="Hayashi S."/>
            <person name="Nagai T."/>
            <person name="Murase T."/>
            <person name="Goto M."/>
            <person name="Iwase A."/>
            <person name="Kikkawa F."/>
        </authorList>
    </citation>
    <scope>FUNCTION</scope>
    <scope>TISSUE SPECIFICITY</scope>
</reference>
<sequence>MANTTGEPEEVSGALSLPSASAYVKLVLLGLIMCVSLAGNAILSLLVLKERALHKAPYYFLLDLCLADGIRSAICFPFVLASVRHGSSWTFSALSCKIVAFMAVLFCFHAAFMLFCISVTRYMAIAHHRFYAKRMTLWTCAAVICMAWTLSVAMAFPPVFDVGTYKFIREEDQCIFEHRYFKANDTLGFMLMLAVLMAATHAVYGKLLLFEYRHRKMKPVQMVPAISQNWTFHGPGATGQAAANWIAGFGRGPMPPTLLGIRQNGHAASRRLLGMDEVKGEKQLGRMFYAITLLFLLLWSPYIVACYWRVFVKACAVPHRYLATAVWMSFAQAAVNPIVCFLLNKDLKKCLRTHAPCWGTGGAPAPREPYCVM</sequence>
<dbReference type="EMBL" id="AL731727">
    <property type="status" value="NOT_ANNOTATED_CDS"/>
    <property type="molecule type" value="Genomic_DNA"/>
</dbReference>
<dbReference type="EMBL" id="BC043021">
    <property type="protein sequence ID" value="AAH43021.1"/>
    <property type="molecule type" value="mRNA"/>
</dbReference>
<dbReference type="EMBL" id="BC096520">
    <property type="protein sequence ID" value="AAH96520.1"/>
    <property type="molecule type" value="mRNA"/>
</dbReference>
<dbReference type="CCDS" id="CCDS30475.1"/>
<dbReference type="RefSeq" id="NP_001300677.1">
    <property type="nucleotide sequence ID" value="NM_001313748.2"/>
</dbReference>
<dbReference type="RefSeq" id="NP_001346378.1">
    <property type="nucleotide sequence ID" value="NM_001359449.1"/>
</dbReference>
<dbReference type="RefSeq" id="NP_001346379.1">
    <property type="nucleotide sequence ID" value="NM_001359450.1"/>
</dbReference>
<dbReference type="RefSeq" id="NP_081819.2">
    <property type="nucleotide sequence ID" value="NM_027543.4"/>
</dbReference>
<dbReference type="RefSeq" id="XP_006529044.1">
    <property type="nucleotide sequence ID" value="XM_006528981.3"/>
</dbReference>
<dbReference type="RefSeq" id="XP_006529046.1">
    <property type="nucleotide sequence ID" value="XM_006528983.3"/>
</dbReference>
<dbReference type="RefSeq" id="XP_011246173.1">
    <property type="nucleotide sequence ID" value="XM_011247871.4"/>
</dbReference>
<dbReference type="SMR" id="Q6PI62"/>
<dbReference type="BioGRID" id="214245">
    <property type="interactions" value="1"/>
</dbReference>
<dbReference type="FunCoup" id="Q6PI62">
    <property type="interactions" value="1050"/>
</dbReference>
<dbReference type="STRING" id="10090.ENSMUSP00000065533"/>
<dbReference type="GlyCosmos" id="Q6PI62">
    <property type="glycosylation" value="2 sites, No reported glycans"/>
</dbReference>
<dbReference type="GlyGen" id="Q6PI62">
    <property type="glycosylation" value="2 sites"/>
</dbReference>
<dbReference type="PhosphoSitePlus" id="Q6PI62"/>
<dbReference type="PaxDb" id="10090-ENSMUSP00000065533"/>
<dbReference type="Antibodypedia" id="589">
    <property type="antibodies" value="215 antibodies from 26 providers"/>
</dbReference>
<dbReference type="DNASU" id="70771"/>
<dbReference type="Ensembl" id="ENSMUST00000070316.12">
    <property type="protein sequence ID" value="ENSMUSP00000065533.6"/>
    <property type="gene ID" value="ENSMUSG00000056679.14"/>
</dbReference>
<dbReference type="GeneID" id="70771"/>
<dbReference type="KEGG" id="mmu:70771"/>
<dbReference type="UCSC" id="uc009uqh.1">
    <property type="organism name" value="mouse"/>
</dbReference>
<dbReference type="AGR" id="MGI:1918021"/>
<dbReference type="CTD" id="54328"/>
<dbReference type="MGI" id="MGI:1918021">
    <property type="gene designation" value="Gpr173"/>
</dbReference>
<dbReference type="VEuPathDB" id="HostDB:ENSMUSG00000056679"/>
<dbReference type="eggNOG" id="KOG3656">
    <property type="taxonomic scope" value="Eukaryota"/>
</dbReference>
<dbReference type="GeneTree" id="ENSGT00890000139436"/>
<dbReference type="HOGENOM" id="CLU_055518_0_0_1"/>
<dbReference type="InParanoid" id="Q6PI62"/>
<dbReference type="OMA" id="KCLRTHT"/>
<dbReference type="OrthoDB" id="6129346at2759"/>
<dbReference type="PhylomeDB" id="Q6PI62"/>
<dbReference type="TreeFam" id="TF331163"/>
<dbReference type="BioGRID-ORCS" id="70771">
    <property type="hits" value="1 hit in 77 CRISPR screens"/>
</dbReference>
<dbReference type="ChiTaRS" id="Gpr173">
    <property type="organism name" value="mouse"/>
</dbReference>
<dbReference type="PRO" id="PR:Q6PI62"/>
<dbReference type="Proteomes" id="UP000000589">
    <property type="component" value="Chromosome X"/>
</dbReference>
<dbReference type="RNAct" id="Q6PI62">
    <property type="molecule type" value="protein"/>
</dbReference>
<dbReference type="Bgee" id="ENSMUSG00000056679">
    <property type="expression patterns" value="Expressed in lumbar dorsal root ganglion and 130 other cell types or tissues"/>
</dbReference>
<dbReference type="GO" id="GO:0005886">
    <property type="term" value="C:plasma membrane"/>
    <property type="evidence" value="ECO:0007669"/>
    <property type="project" value="UniProtKB-SubCell"/>
</dbReference>
<dbReference type="GO" id="GO:0004968">
    <property type="term" value="F:gonadotropin-releasing hormone receptor activity"/>
    <property type="evidence" value="ECO:0000315"/>
    <property type="project" value="MGI"/>
</dbReference>
<dbReference type="GO" id="GO:2001223">
    <property type="term" value="P:negative regulation of neuron migration"/>
    <property type="evidence" value="ECO:0000315"/>
    <property type="project" value="MGI"/>
</dbReference>
<dbReference type="FunFam" id="1.20.1070.10:FF:000074">
    <property type="entry name" value="probable G-protein coupled receptor 173"/>
    <property type="match status" value="1"/>
</dbReference>
<dbReference type="Gene3D" id="1.20.1070.10">
    <property type="entry name" value="Rhodopsin 7-helix transmembrane proteins"/>
    <property type="match status" value="1"/>
</dbReference>
<dbReference type="InterPro" id="IPR051509">
    <property type="entry name" value="GPCR_Orphan/Phoenixin"/>
</dbReference>
<dbReference type="InterPro" id="IPR000276">
    <property type="entry name" value="GPCR_Rhodpsn"/>
</dbReference>
<dbReference type="InterPro" id="IPR017452">
    <property type="entry name" value="GPCR_Rhodpsn_7TM"/>
</dbReference>
<dbReference type="PANTHER" id="PTHR19268">
    <property type="entry name" value="G PROTEIN-COUPLED RECEPTOR"/>
    <property type="match status" value="1"/>
</dbReference>
<dbReference type="PANTHER" id="PTHR19268:SF4">
    <property type="entry name" value="G-PROTEIN COUPLED RECEPTOR 173-RELATED"/>
    <property type="match status" value="1"/>
</dbReference>
<dbReference type="Pfam" id="PF00001">
    <property type="entry name" value="7tm_1"/>
    <property type="match status" value="1"/>
</dbReference>
<dbReference type="PRINTS" id="PR00237">
    <property type="entry name" value="GPCRRHODOPSN"/>
</dbReference>
<dbReference type="SUPFAM" id="SSF81321">
    <property type="entry name" value="Family A G protein-coupled receptor-like"/>
    <property type="match status" value="1"/>
</dbReference>
<dbReference type="PROSITE" id="PS50262">
    <property type="entry name" value="G_PROTEIN_RECEP_F1_2"/>
    <property type="match status" value="1"/>
</dbReference>
<evidence type="ECO:0000255" key="1"/>
<evidence type="ECO:0000255" key="2">
    <source>
        <dbReference type="PROSITE-ProRule" id="PRU00521"/>
    </source>
</evidence>
<evidence type="ECO:0000269" key="3">
    <source>
    </source>
</evidence>
<evidence type="ECO:0000269" key="4">
    <source>
    </source>
</evidence>
<evidence type="ECO:0000269" key="5">
    <source>
    </source>
</evidence>
<evidence type="ECO:0000305" key="6"/>
<gene>
    <name type="primary">Gpr173</name>
    <name type="synonym">Sreb3</name>
</gene>
<protein>
    <recommendedName>
        <fullName>Probable G-protein coupled receptor 173</fullName>
    </recommendedName>
    <alternativeName>
        <fullName>Super conserved receptor expressed in brain 3</fullName>
    </alternativeName>
</protein>
<name>GP173_MOUSE</name>
<organism>
    <name type="scientific">Mus musculus</name>
    <name type="common">Mouse</name>
    <dbReference type="NCBI Taxonomy" id="10090"/>
    <lineage>
        <taxon>Eukaryota</taxon>
        <taxon>Metazoa</taxon>
        <taxon>Chordata</taxon>
        <taxon>Craniata</taxon>
        <taxon>Vertebrata</taxon>
        <taxon>Euteleostomi</taxon>
        <taxon>Mammalia</taxon>
        <taxon>Eutheria</taxon>
        <taxon>Euarchontoglires</taxon>
        <taxon>Glires</taxon>
        <taxon>Rodentia</taxon>
        <taxon>Myomorpha</taxon>
        <taxon>Muroidea</taxon>
        <taxon>Muridae</taxon>
        <taxon>Murinae</taxon>
        <taxon>Mus</taxon>
        <taxon>Mus</taxon>
    </lineage>
</organism>